<keyword id="KW-0004">4Fe-4S</keyword>
<keyword id="KW-0997">Cell inner membrane</keyword>
<keyword id="KW-1003">Cell membrane</keyword>
<keyword id="KW-0408">Iron</keyword>
<keyword id="KW-0411">Iron-sulfur</keyword>
<keyword id="KW-0472">Membrane</keyword>
<keyword id="KW-0479">Metal-binding</keyword>
<keyword id="KW-0520">NAD</keyword>
<keyword id="KW-0874">Quinone</keyword>
<keyword id="KW-1278">Translocase</keyword>
<keyword id="KW-0813">Transport</keyword>
<keyword id="KW-0830">Ubiquinone</keyword>
<protein>
    <recommendedName>
        <fullName evidence="1">NADH-quinone oxidoreductase subunit B</fullName>
        <ecNumber evidence="1">7.1.1.-</ecNumber>
    </recommendedName>
    <alternativeName>
        <fullName evidence="1">NADH dehydrogenase I subunit B</fullName>
    </alternativeName>
    <alternativeName>
        <fullName evidence="1">NDH-1 subunit B</fullName>
    </alternativeName>
</protein>
<dbReference type="EC" id="7.1.1.-" evidence="1"/>
<dbReference type="EMBL" id="CP001182">
    <property type="protein sequence ID" value="ACJ40599.1"/>
    <property type="molecule type" value="Genomic_DNA"/>
</dbReference>
<dbReference type="RefSeq" id="WP_000878003.1">
    <property type="nucleotide sequence ID" value="NC_011586.2"/>
</dbReference>
<dbReference type="SMR" id="B7I740"/>
<dbReference type="KEGG" id="abn:AB57_0801"/>
<dbReference type="HOGENOM" id="CLU_055737_7_3_6"/>
<dbReference type="Proteomes" id="UP000007094">
    <property type="component" value="Chromosome"/>
</dbReference>
<dbReference type="GO" id="GO:0005886">
    <property type="term" value="C:plasma membrane"/>
    <property type="evidence" value="ECO:0007669"/>
    <property type="project" value="UniProtKB-SubCell"/>
</dbReference>
<dbReference type="GO" id="GO:0045271">
    <property type="term" value="C:respiratory chain complex I"/>
    <property type="evidence" value="ECO:0007669"/>
    <property type="project" value="TreeGrafter"/>
</dbReference>
<dbReference type="GO" id="GO:0051539">
    <property type="term" value="F:4 iron, 4 sulfur cluster binding"/>
    <property type="evidence" value="ECO:0007669"/>
    <property type="project" value="UniProtKB-KW"/>
</dbReference>
<dbReference type="GO" id="GO:0005506">
    <property type="term" value="F:iron ion binding"/>
    <property type="evidence" value="ECO:0007669"/>
    <property type="project" value="UniProtKB-UniRule"/>
</dbReference>
<dbReference type="GO" id="GO:0008137">
    <property type="term" value="F:NADH dehydrogenase (ubiquinone) activity"/>
    <property type="evidence" value="ECO:0007669"/>
    <property type="project" value="InterPro"/>
</dbReference>
<dbReference type="GO" id="GO:0050136">
    <property type="term" value="F:NADH:ubiquinone reductase (non-electrogenic) activity"/>
    <property type="evidence" value="ECO:0007669"/>
    <property type="project" value="UniProtKB-UniRule"/>
</dbReference>
<dbReference type="GO" id="GO:0048038">
    <property type="term" value="F:quinone binding"/>
    <property type="evidence" value="ECO:0007669"/>
    <property type="project" value="UniProtKB-KW"/>
</dbReference>
<dbReference type="GO" id="GO:0009060">
    <property type="term" value="P:aerobic respiration"/>
    <property type="evidence" value="ECO:0007669"/>
    <property type="project" value="TreeGrafter"/>
</dbReference>
<dbReference type="GO" id="GO:0015990">
    <property type="term" value="P:electron transport coupled proton transport"/>
    <property type="evidence" value="ECO:0007669"/>
    <property type="project" value="TreeGrafter"/>
</dbReference>
<dbReference type="FunFam" id="3.40.50.12280:FF:000002">
    <property type="entry name" value="NADH-quinone oxidoreductase subunit B"/>
    <property type="match status" value="1"/>
</dbReference>
<dbReference type="Gene3D" id="3.40.50.12280">
    <property type="match status" value="1"/>
</dbReference>
<dbReference type="HAMAP" id="MF_01356">
    <property type="entry name" value="NDH1_NuoB"/>
    <property type="match status" value="1"/>
</dbReference>
<dbReference type="InterPro" id="IPR006137">
    <property type="entry name" value="NADH_UbQ_OxRdtase-like_20kDa"/>
</dbReference>
<dbReference type="InterPro" id="IPR006138">
    <property type="entry name" value="NADH_UQ_OxRdtase_20Kd_su"/>
</dbReference>
<dbReference type="NCBIfam" id="TIGR01957">
    <property type="entry name" value="nuoB_fam"/>
    <property type="match status" value="1"/>
</dbReference>
<dbReference type="NCBIfam" id="NF005012">
    <property type="entry name" value="PRK06411.1"/>
    <property type="match status" value="1"/>
</dbReference>
<dbReference type="PANTHER" id="PTHR11995">
    <property type="entry name" value="NADH DEHYDROGENASE"/>
    <property type="match status" value="1"/>
</dbReference>
<dbReference type="PANTHER" id="PTHR11995:SF14">
    <property type="entry name" value="NADH DEHYDROGENASE [UBIQUINONE] IRON-SULFUR PROTEIN 7, MITOCHONDRIAL"/>
    <property type="match status" value="1"/>
</dbReference>
<dbReference type="Pfam" id="PF01058">
    <property type="entry name" value="Oxidored_q6"/>
    <property type="match status" value="1"/>
</dbReference>
<dbReference type="SUPFAM" id="SSF56770">
    <property type="entry name" value="HydA/Nqo6-like"/>
    <property type="match status" value="1"/>
</dbReference>
<dbReference type="PROSITE" id="PS01150">
    <property type="entry name" value="COMPLEX1_20K"/>
    <property type="match status" value="1"/>
</dbReference>
<proteinExistence type="inferred from homology"/>
<feature type="chain" id="PRO_0000376104" description="NADH-quinone oxidoreductase subunit B">
    <location>
        <begin position="1"/>
        <end position="225"/>
    </location>
</feature>
<feature type="binding site" evidence="1">
    <location>
        <position position="65"/>
    </location>
    <ligand>
        <name>[4Fe-4S] cluster</name>
        <dbReference type="ChEBI" id="CHEBI:49883"/>
    </ligand>
</feature>
<feature type="binding site" evidence="1">
    <location>
        <position position="66"/>
    </location>
    <ligand>
        <name>[4Fe-4S] cluster</name>
        <dbReference type="ChEBI" id="CHEBI:49883"/>
    </ligand>
</feature>
<feature type="binding site" evidence="1">
    <location>
        <position position="131"/>
    </location>
    <ligand>
        <name>[4Fe-4S] cluster</name>
        <dbReference type="ChEBI" id="CHEBI:49883"/>
    </ligand>
</feature>
<feature type="binding site" evidence="1">
    <location>
        <position position="160"/>
    </location>
    <ligand>
        <name>[4Fe-4S] cluster</name>
        <dbReference type="ChEBI" id="CHEBI:49883"/>
    </ligand>
</feature>
<evidence type="ECO:0000255" key="1">
    <source>
        <dbReference type="HAMAP-Rule" id="MF_01356"/>
    </source>
</evidence>
<sequence length="225" mass="25552">MKYTLTRANPDADQYPLQDRQIVTDPLEEEVNKNVFMTRLEDVLHTAVNWGRKNSLWPFNFGTSCCYVEYATTLTGVHDLSRFGAEVIRASPRQADLMIVAGTCFVKMAPVIQRLYEQMLEPKWVISMGACANSGGMYDIYSVVQGVDKIIPVDVYVPGCPPRPEALIQALMLLQDQIQLERRPLSAVIGDDLQPVYKPKMMPERDRKNAQRIAVKNLRSMDEIK</sequence>
<name>NUOB_ACIB5</name>
<comment type="function">
    <text evidence="1">NDH-1 shuttles electrons from NADH, via FMN and iron-sulfur (Fe-S) centers, to quinones in the respiratory chain. The immediate electron acceptor for the enzyme in this species is believed to be ubiquinone. Couples the redox reaction to proton translocation (for every two electrons transferred, four hydrogen ions are translocated across the cytoplasmic membrane), and thus conserves the redox energy in a proton gradient.</text>
</comment>
<comment type="catalytic activity">
    <reaction evidence="1">
        <text>a quinone + NADH + 5 H(+)(in) = a quinol + NAD(+) + 4 H(+)(out)</text>
        <dbReference type="Rhea" id="RHEA:57888"/>
        <dbReference type="ChEBI" id="CHEBI:15378"/>
        <dbReference type="ChEBI" id="CHEBI:24646"/>
        <dbReference type="ChEBI" id="CHEBI:57540"/>
        <dbReference type="ChEBI" id="CHEBI:57945"/>
        <dbReference type="ChEBI" id="CHEBI:132124"/>
    </reaction>
</comment>
<comment type="cofactor">
    <cofactor evidence="1">
        <name>[4Fe-4S] cluster</name>
        <dbReference type="ChEBI" id="CHEBI:49883"/>
    </cofactor>
    <text evidence="1">Binds 1 [4Fe-4S] cluster.</text>
</comment>
<comment type="subunit">
    <text evidence="1">NDH-1 is composed of 14 different subunits. Subunits NuoB, C, D, E, F, and G constitute the peripheral sector of the complex.</text>
</comment>
<comment type="subcellular location">
    <subcellularLocation>
        <location evidence="1">Cell inner membrane</location>
        <topology evidence="1">Peripheral membrane protein</topology>
        <orientation evidence="1">Cytoplasmic side</orientation>
    </subcellularLocation>
</comment>
<comment type="similarity">
    <text evidence="1">Belongs to the complex I 20 kDa subunit family.</text>
</comment>
<organism>
    <name type="scientific">Acinetobacter baumannii (strain AB0057)</name>
    <dbReference type="NCBI Taxonomy" id="480119"/>
    <lineage>
        <taxon>Bacteria</taxon>
        <taxon>Pseudomonadati</taxon>
        <taxon>Pseudomonadota</taxon>
        <taxon>Gammaproteobacteria</taxon>
        <taxon>Moraxellales</taxon>
        <taxon>Moraxellaceae</taxon>
        <taxon>Acinetobacter</taxon>
        <taxon>Acinetobacter calcoaceticus/baumannii complex</taxon>
    </lineage>
</organism>
<accession>B7I740</accession>
<gene>
    <name evidence="1" type="primary">nuoB</name>
    <name type="ordered locus">AB57_0801</name>
</gene>
<reference key="1">
    <citation type="journal article" date="2008" name="J. Bacteriol.">
        <title>Comparative genome sequence analysis of multidrug-resistant Acinetobacter baumannii.</title>
        <authorList>
            <person name="Adams M.D."/>
            <person name="Goglin K."/>
            <person name="Molyneaux N."/>
            <person name="Hujer K.M."/>
            <person name="Lavender H."/>
            <person name="Jamison J.J."/>
            <person name="MacDonald I.J."/>
            <person name="Martin K.M."/>
            <person name="Russo T."/>
            <person name="Campagnari A.A."/>
            <person name="Hujer A.M."/>
            <person name="Bonomo R.A."/>
            <person name="Gill S.R."/>
        </authorList>
    </citation>
    <scope>NUCLEOTIDE SEQUENCE [LARGE SCALE GENOMIC DNA]</scope>
    <source>
        <strain>AB0057</strain>
    </source>
</reference>